<comment type="function">
    <text evidence="1 3">May act in the sexual differentiation pathway.</text>
</comment>
<comment type="interaction">
    <interactant intactId="EBI-29244">
        <id>P53849</id>
    </interactant>
    <interactant intactId="EBI-12823">
        <id>P04147</id>
        <label>PAB1</label>
    </interactant>
    <organismsDiffer>false</organismsDiffer>
    <experiments>2</experiments>
</comment>
<comment type="subcellular location">
    <subcellularLocation>
        <location evidence="4">Cytoplasm</location>
    </subcellularLocation>
</comment>
<comment type="miscellaneous">
    <text evidence="5">Present with 96655 molecules/cell in log phase SD medium.</text>
</comment>
<feature type="chain" id="PRO_0000087496" description="Zinc finger protein GIS2">
    <location>
        <begin position="1"/>
        <end position="153"/>
    </location>
</feature>
<feature type="zinc finger region" description="CCHC-type 1" evidence="2">
    <location>
        <begin position="4"/>
        <end position="21"/>
    </location>
</feature>
<feature type="zinc finger region" description="CCHC-type 2" evidence="2">
    <location>
        <begin position="23"/>
        <end position="40"/>
    </location>
</feature>
<feature type="zinc finger region" description="CCHC-type 3" evidence="2">
    <location>
        <begin position="47"/>
        <end position="64"/>
    </location>
</feature>
<feature type="zinc finger region" description="CCHC-type 4" evidence="2">
    <location>
        <begin position="65"/>
        <end position="82"/>
    </location>
</feature>
<feature type="zinc finger region" description="CCHC-type 5" evidence="2">
    <location>
        <begin position="92"/>
        <end position="109"/>
    </location>
</feature>
<feature type="zinc finger region" description="CCHC-type 6" evidence="2">
    <location>
        <begin position="116"/>
        <end position="133"/>
    </location>
</feature>
<feature type="zinc finger region" description="CCHC-type 7" evidence="2">
    <location>
        <begin position="135"/>
        <end position="152"/>
    </location>
</feature>
<dbReference type="EMBL" id="X96722">
    <property type="protein sequence ID" value="CAA65489.1"/>
    <property type="molecule type" value="Genomic_DNA"/>
</dbReference>
<dbReference type="EMBL" id="Z71531">
    <property type="protein sequence ID" value="CAA96162.1"/>
    <property type="molecule type" value="Genomic_DNA"/>
</dbReference>
<dbReference type="EMBL" id="AY558002">
    <property type="protein sequence ID" value="AAS56328.1"/>
    <property type="molecule type" value="Genomic_DNA"/>
</dbReference>
<dbReference type="EMBL" id="BK006947">
    <property type="protein sequence ID" value="DAA10304.1"/>
    <property type="molecule type" value="Genomic_DNA"/>
</dbReference>
<dbReference type="PIR" id="S63228">
    <property type="entry name" value="S63228"/>
</dbReference>
<dbReference type="RefSeq" id="NP_014144.1">
    <property type="nucleotide sequence ID" value="NM_001183093.1"/>
</dbReference>
<dbReference type="BioGRID" id="35584">
    <property type="interactions" value="1277"/>
</dbReference>
<dbReference type="DIP" id="DIP-2669N"/>
<dbReference type="FunCoup" id="P53849">
    <property type="interactions" value="365"/>
</dbReference>
<dbReference type="IntAct" id="P53849">
    <property type="interactions" value="20"/>
</dbReference>
<dbReference type="MINT" id="P53849"/>
<dbReference type="STRING" id="4932.YNL255C"/>
<dbReference type="iPTMnet" id="P53849"/>
<dbReference type="PaxDb" id="4932-YNL255C"/>
<dbReference type="PeptideAtlas" id="P53849"/>
<dbReference type="EnsemblFungi" id="YNL255C_mRNA">
    <property type="protein sequence ID" value="YNL255C"/>
    <property type="gene ID" value="YNL255C"/>
</dbReference>
<dbReference type="GeneID" id="855466"/>
<dbReference type="KEGG" id="sce:YNL255C"/>
<dbReference type="AGR" id="SGD:S000005199"/>
<dbReference type="SGD" id="S000005199">
    <property type="gene designation" value="GIS2"/>
</dbReference>
<dbReference type="VEuPathDB" id="FungiDB:YNL255C"/>
<dbReference type="eggNOG" id="KOG4400">
    <property type="taxonomic scope" value="Eukaryota"/>
</dbReference>
<dbReference type="GeneTree" id="ENSGT00950000183041"/>
<dbReference type="HOGENOM" id="CLU_058879_2_0_1"/>
<dbReference type="InParanoid" id="P53849"/>
<dbReference type="OMA" id="EHKQCYN"/>
<dbReference type="OrthoDB" id="3863715at2759"/>
<dbReference type="BioCyc" id="YEAST:G3O-33252-MONOMER"/>
<dbReference type="BioGRID-ORCS" id="855466">
    <property type="hits" value="4 hits in 10 CRISPR screens"/>
</dbReference>
<dbReference type="CD-CODE" id="A777E0F8">
    <property type="entry name" value="P-body"/>
</dbReference>
<dbReference type="CD-CODE" id="E03F929F">
    <property type="entry name" value="Stress granule"/>
</dbReference>
<dbReference type="PRO" id="PR:P53849"/>
<dbReference type="Proteomes" id="UP000002311">
    <property type="component" value="Chromosome XIV"/>
</dbReference>
<dbReference type="RNAct" id="P53849">
    <property type="molecule type" value="protein"/>
</dbReference>
<dbReference type="GO" id="GO:0005737">
    <property type="term" value="C:cytoplasm"/>
    <property type="evidence" value="ECO:0007005"/>
    <property type="project" value="SGD"/>
</dbReference>
<dbReference type="GO" id="GO:0010494">
    <property type="term" value="C:cytoplasmic stress granule"/>
    <property type="evidence" value="ECO:0000314"/>
    <property type="project" value="SGD"/>
</dbReference>
<dbReference type="GO" id="GO:0000932">
    <property type="term" value="C:P-body"/>
    <property type="evidence" value="ECO:0000314"/>
    <property type="project" value="SGD"/>
</dbReference>
<dbReference type="GO" id="GO:0003729">
    <property type="term" value="F:mRNA binding"/>
    <property type="evidence" value="ECO:0000314"/>
    <property type="project" value="SGD"/>
</dbReference>
<dbReference type="GO" id="GO:0003697">
    <property type="term" value="F:single-stranded DNA binding"/>
    <property type="evidence" value="ECO:0000314"/>
    <property type="project" value="SGD"/>
</dbReference>
<dbReference type="GO" id="GO:0003727">
    <property type="term" value="F:single-stranded RNA binding"/>
    <property type="evidence" value="ECO:0000318"/>
    <property type="project" value="GO_Central"/>
</dbReference>
<dbReference type="GO" id="GO:0045182">
    <property type="term" value="F:translation regulator activity"/>
    <property type="evidence" value="ECO:0000314"/>
    <property type="project" value="SGD"/>
</dbReference>
<dbReference type="GO" id="GO:0008270">
    <property type="term" value="F:zinc ion binding"/>
    <property type="evidence" value="ECO:0007669"/>
    <property type="project" value="UniProtKB-KW"/>
</dbReference>
<dbReference type="GO" id="GO:2000767">
    <property type="term" value="P:positive regulation of cytoplasmic translation"/>
    <property type="evidence" value="ECO:0000314"/>
    <property type="project" value="SGD"/>
</dbReference>
<dbReference type="FunFam" id="4.10.60.10:FF:000049">
    <property type="entry name" value="Zinc finger protein GIS2"/>
    <property type="match status" value="1"/>
</dbReference>
<dbReference type="Gene3D" id="4.10.60.10">
    <property type="entry name" value="Zinc finger, CCHC-type"/>
    <property type="match status" value="5"/>
</dbReference>
<dbReference type="InterPro" id="IPR051714">
    <property type="entry name" value="CCHC-ZF_NABP"/>
</dbReference>
<dbReference type="InterPro" id="IPR001878">
    <property type="entry name" value="Znf_CCHC"/>
</dbReference>
<dbReference type="InterPro" id="IPR036875">
    <property type="entry name" value="Znf_CCHC_sf"/>
</dbReference>
<dbReference type="PANTHER" id="PTHR23002">
    <property type="entry name" value="ZINC FINGER CCHC DOMAIN CONTAINING PROTEIN"/>
    <property type="match status" value="1"/>
</dbReference>
<dbReference type="Pfam" id="PF00098">
    <property type="entry name" value="zf-CCHC"/>
    <property type="match status" value="7"/>
</dbReference>
<dbReference type="SMART" id="SM00343">
    <property type="entry name" value="ZnF_C2HC"/>
    <property type="match status" value="7"/>
</dbReference>
<dbReference type="SUPFAM" id="SSF57756">
    <property type="entry name" value="Retrovirus zinc finger-like domains"/>
    <property type="match status" value="3"/>
</dbReference>
<dbReference type="PROSITE" id="PS50158">
    <property type="entry name" value="ZF_CCHC"/>
    <property type="match status" value="7"/>
</dbReference>
<sequence>MSQKACYVCGKIGHLAEDCDSERLCYNCNKPGHVQTDCTMPRTVEFKQCYNCGETGHVRSECTVQRCFNCNQTGHISRECPEPKKTSRFSKVSCYKCGGPNHMAKDCMKEDGISGLKCYTCGQAGHMSRDCQNDRLCYNCNETGHISKDCPKA</sequence>
<accession>P53849</accession>
<accession>D6W0T8</accession>
<evidence type="ECO:0000250" key="1"/>
<evidence type="ECO:0000255" key="2">
    <source>
        <dbReference type="PROSITE-ProRule" id="PRU00047"/>
    </source>
</evidence>
<evidence type="ECO:0000269" key="3">
    <source>
    </source>
</evidence>
<evidence type="ECO:0000269" key="4">
    <source>
    </source>
</evidence>
<evidence type="ECO:0000269" key="5">
    <source>
    </source>
</evidence>
<protein>
    <recommendedName>
        <fullName>Zinc finger protein GIS2</fullName>
    </recommendedName>
</protein>
<gene>
    <name type="primary">GIS2</name>
    <name type="ordered locus">YNL255C</name>
    <name type="ORF">N0852</name>
</gene>
<reference key="1">
    <citation type="journal article" date="1997" name="Yeast">
        <title>Sequence analysis of the 33 kb long region between ORC5 and SUI1 from the left arm of chromosome XIV from Saccharomyces cerevisiae.</title>
        <authorList>
            <person name="Sen-Gupta M."/>
            <person name="Gueldener U."/>
            <person name="Beinhauer J.D."/>
            <person name="Fiedler T.A."/>
            <person name="Hegemann J.H."/>
        </authorList>
    </citation>
    <scope>NUCLEOTIDE SEQUENCE [GENOMIC DNA]</scope>
    <source>
        <strain>ATCC 96604 / S288c / FY1679</strain>
    </source>
</reference>
<reference key="2">
    <citation type="journal article" date="1997" name="Nature">
        <title>The nucleotide sequence of Saccharomyces cerevisiae chromosome XIV and its evolutionary implications.</title>
        <authorList>
            <person name="Philippsen P."/>
            <person name="Kleine K."/>
            <person name="Poehlmann R."/>
            <person name="Duesterhoeft A."/>
            <person name="Hamberg K."/>
            <person name="Hegemann J.H."/>
            <person name="Obermaier B."/>
            <person name="Urrestarazu L.A."/>
            <person name="Aert R."/>
            <person name="Albermann K."/>
            <person name="Altmann R."/>
            <person name="Andre B."/>
            <person name="Baladron V."/>
            <person name="Ballesta J.P.G."/>
            <person name="Becam A.-M."/>
            <person name="Beinhauer J.D."/>
            <person name="Boskovic J."/>
            <person name="Buitrago M.J."/>
            <person name="Bussereau F."/>
            <person name="Coster F."/>
            <person name="Crouzet M."/>
            <person name="D'Angelo M."/>
            <person name="Dal Pero F."/>
            <person name="De Antoni A."/>
            <person name="del Rey F."/>
            <person name="Doignon F."/>
            <person name="Domdey H."/>
            <person name="Dubois E."/>
            <person name="Fiedler T.A."/>
            <person name="Fleig U."/>
            <person name="Floeth M."/>
            <person name="Fritz C."/>
            <person name="Gaillardin C."/>
            <person name="Garcia-Cantalejo J.M."/>
            <person name="Glansdorff N."/>
            <person name="Goffeau A."/>
            <person name="Gueldener U."/>
            <person name="Herbert C.J."/>
            <person name="Heumann K."/>
            <person name="Heuss-Neitzel D."/>
            <person name="Hilbert H."/>
            <person name="Hinni K."/>
            <person name="Iraqui Houssaini I."/>
            <person name="Jacquet M."/>
            <person name="Jimenez A."/>
            <person name="Jonniaux J.-L."/>
            <person name="Karpfinger-Hartl L."/>
            <person name="Lanfranchi G."/>
            <person name="Lepingle A."/>
            <person name="Levesque H."/>
            <person name="Lyck R."/>
            <person name="Maftahi M."/>
            <person name="Mallet L."/>
            <person name="Maurer C.T.C."/>
            <person name="Messenguy F."/>
            <person name="Mewes H.-W."/>
            <person name="Moestl D."/>
            <person name="Nasr F."/>
            <person name="Nicaud J.-M."/>
            <person name="Niedenthal R.K."/>
            <person name="Pandolfo D."/>
            <person name="Pierard A."/>
            <person name="Piravandi E."/>
            <person name="Planta R.J."/>
            <person name="Pohl T.M."/>
            <person name="Purnelle B."/>
            <person name="Rebischung C."/>
            <person name="Remacha M.A."/>
            <person name="Revuelta J.L."/>
            <person name="Rinke M."/>
            <person name="Saiz J.E."/>
            <person name="Sartorello F."/>
            <person name="Scherens B."/>
            <person name="Sen-Gupta M."/>
            <person name="Soler-Mira A."/>
            <person name="Urbanus J.H.M."/>
            <person name="Valle G."/>
            <person name="Van Dyck L."/>
            <person name="Verhasselt P."/>
            <person name="Vierendeels F."/>
            <person name="Vissers S."/>
            <person name="Voet M."/>
            <person name="Volckaert G."/>
            <person name="Wach A."/>
            <person name="Wambutt R."/>
            <person name="Wedler H."/>
            <person name="Zollner A."/>
            <person name="Hani J."/>
        </authorList>
    </citation>
    <scope>NUCLEOTIDE SEQUENCE [LARGE SCALE GENOMIC DNA]</scope>
    <source>
        <strain>ATCC 204508 / S288c</strain>
    </source>
</reference>
<reference key="3">
    <citation type="journal article" date="2014" name="G3 (Bethesda)">
        <title>The reference genome sequence of Saccharomyces cerevisiae: Then and now.</title>
        <authorList>
            <person name="Engel S.R."/>
            <person name="Dietrich F.S."/>
            <person name="Fisk D.G."/>
            <person name="Binkley G."/>
            <person name="Balakrishnan R."/>
            <person name="Costanzo M.C."/>
            <person name="Dwight S.S."/>
            <person name="Hitz B.C."/>
            <person name="Karra K."/>
            <person name="Nash R.S."/>
            <person name="Weng S."/>
            <person name="Wong E.D."/>
            <person name="Lloyd P."/>
            <person name="Skrzypek M.S."/>
            <person name="Miyasato S.R."/>
            <person name="Simison M."/>
            <person name="Cherry J.M."/>
        </authorList>
    </citation>
    <scope>GENOME REANNOTATION</scope>
    <source>
        <strain>ATCC 204508 / S288c</strain>
    </source>
</reference>
<reference key="4">
    <citation type="journal article" date="2007" name="Genome Res.">
        <title>Approaching a complete repository of sequence-verified protein-encoding clones for Saccharomyces cerevisiae.</title>
        <authorList>
            <person name="Hu Y."/>
            <person name="Rolfs A."/>
            <person name="Bhullar B."/>
            <person name="Murthy T.V.S."/>
            <person name="Zhu C."/>
            <person name="Berger M.F."/>
            <person name="Camargo A.A."/>
            <person name="Kelley F."/>
            <person name="McCarron S."/>
            <person name="Jepson D."/>
            <person name="Richardson A."/>
            <person name="Raphael J."/>
            <person name="Moreira D."/>
            <person name="Taycher E."/>
            <person name="Zuo D."/>
            <person name="Mohr S."/>
            <person name="Kane M.F."/>
            <person name="Williamson J."/>
            <person name="Simpson A.J.G."/>
            <person name="Bulyk M.L."/>
            <person name="Harlow E."/>
            <person name="Marsischky G."/>
            <person name="Kolodner R.D."/>
            <person name="LaBaer J."/>
        </authorList>
    </citation>
    <scope>NUCLEOTIDE SEQUENCE [GENOMIC DNA]</scope>
    <source>
        <strain>ATCC 204508 / S288c</strain>
    </source>
</reference>
<reference key="5">
    <citation type="journal article" date="1999" name="Mol. Gen. Genet.">
        <title>Yeast genes GIS1-4: multicopy suppressors of the Gal- phenotype of snf1 mig1 srb8/10/11 cells.</title>
        <authorList>
            <person name="Balciunas D."/>
            <person name="Ronne H."/>
        </authorList>
    </citation>
    <scope>FUNCTION</scope>
</reference>
<reference key="6">
    <citation type="journal article" date="2003" name="Nature">
        <title>Global analysis of protein localization in budding yeast.</title>
        <authorList>
            <person name="Huh W.-K."/>
            <person name="Falvo J.V."/>
            <person name="Gerke L.C."/>
            <person name="Carroll A.S."/>
            <person name="Howson R.W."/>
            <person name="Weissman J.S."/>
            <person name="O'Shea E.K."/>
        </authorList>
    </citation>
    <scope>SUBCELLULAR LOCATION [LARGE SCALE ANALYSIS]</scope>
</reference>
<reference key="7">
    <citation type="journal article" date="2003" name="Nature">
        <title>Global analysis of protein expression in yeast.</title>
        <authorList>
            <person name="Ghaemmaghami S."/>
            <person name="Huh W.-K."/>
            <person name="Bower K."/>
            <person name="Howson R.W."/>
            <person name="Belle A."/>
            <person name="Dephoure N."/>
            <person name="O'Shea E.K."/>
            <person name="Weissman J.S."/>
        </authorList>
    </citation>
    <scope>LEVEL OF PROTEIN EXPRESSION [LARGE SCALE ANALYSIS]</scope>
</reference>
<proteinExistence type="evidence at protein level"/>
<name>GIS2_YEAST</name>
<organism>
    <name type="scientific">Saccharomyces cerevisiae (strain ATCC 204508 / S288c)</name>
    <name type="common">Baker's yeast</name>
    <dbReference type="NCBI Taxonomy" id="559292"/>
    <lineage>
        <taxon>Eukaryota</taxon>
        <taxon>Fungi</taxon>
        <taxon>Dikarya</taxon>
        <taxon>Ascomycota</taxon>
        <taxon>Saccharomycotina</taxon>
        <taxon>Saccharomycetes</taxon>
        <taxon>Saccharomycetales</taxon>
        <taxon>Saccharomycetaceae</taxon>
        <taxon>Saccharomyces</taxon>
    </lineage>
</organism>
<keyword id="KW-0963">Cytoplasm</keyword>
<keyword id="KW-0479">Metal-binding</keyword>
<keyword id="KW-1185">Reference proteome</keyword>
<keyword id="KW-0677">Repeat</keyword>
<keyword id="KW-0862">Zinc</keyword>
<keyword id="KW-0863">Zinc-finger</keyword>